<protein>
    <recommendedName>
        <fullName>Transcription factor Sox-3</fullName>
    </recommendedName>
</protein>
<keyword id="KW-0010">Activator</keyword>
<keyword id="KW-0217">Developmental protein</keyword>
<keyword id="KW-0238">DNA-binding</keyword>
<keyword id="KW-0539">Nucleus</keyword>
<keyword id="KW-0597">Phosphoprotein</keyword>
<keyword id="KW-1185">Reference proteome</keyword>
<keyword id="KW-0804">Transcription</keyword>
<keyword id="KW-0805">Transcription regulation</keyword>
<evidence type="ECO:0000250" key="1">
    <source>
        <dbReference type="UniProtKB" id="P41225"/>
    </source>
</evidence>
<evidence type="ECO:0000255" key="2">
    <source>
        <dbReference type="PROSITE-ProRule" id="PRU00267"/>
    </source>
</evidence>
<evidence type="ECO:0000256" key="3">
    <source>
        <dbReference type="SAM" id="MobiDB-lite"/>
    </source>
</evidence>
<evidence type="ECO:0000269" key="4">
    <source>
    </source>
</evidence>
<evidence type="ECO:0000269" key="5">
    <source>
    </source>
</evidence>
<evidence type="ECO:0000269" key="6">
    <source>
    </source>
</evidence>
<evidence type="ECO:0000269" key="7">
    <source>
    </source>
</evidence>
<evidence type="ECO:0000305" key="8"/>
<evidence type="ECO:0000312" key="9">
    <source>
        <dbReference type="EMBL" id="AAH92845.1"/>
    </source>
</evidence>
<evidence type="ECO:0000312" key="10">
    <source>
        <dbReference type="EMBL" id="AAP79985.1"/>
    </source>
</evidence>
<evidence type="ECO:0000312" key="11">
    <source>
        <dbReference type="EMBL" id="BAD11369.2"/>
    </source>
</evidence>
<evidence type="ECO:0000312" key="12">
    <source>
        <dbReference type="EMBL" id="BAE48584.1"/>
    </source>
</evidence>
<evidence type="ECO:0000312" key="13">
    <source>
        <dbReference type="ZFIN" id="ZDB-GENE-980526-333"/>
    </source>
</evidence>
<name>SOX3_DANRE</name>
<organism>
    <name type="scientific">Danio rerio</name>
    <name type="common">Zebrafish</name>
    <name type="synonym">Brachydanio rerio</name>
    <dbReference type="NCBI Taxonomy" id="7955"/>
    <lineage>
        <taxon>Eukaryota</taxon>
        <taxon>Metazoa</taxon>
        <taxon>Chordata</taxon>
        <taxon>Craniata</taxon>
        <taxon>Vertebrata</taxon>
        <taxon>Euteleostomi</taxon>
        <taxon>Actinopterygii</taxon>
        <taxon>Neopterygii</taxon>
        <taxon>Teleostei</taxon>
        <taxon>Ostariophysi</taxon>
        <taxon>Cypriniformes</taxon>
        <taxon>Danionidae</taxon>
        <taxon>Danioninae</taxon>
        <taxon>Danio</taxon>
    </lineage>
</organism>
<feature type="chain" id="PRO_0000238912" description="Transcription factor Sox-3">
    <location>
        <begin position="1"/>
        <end position="300"/>
    </location>
</feature>
<feature type="DNA-binding region" description="HMG box" evidence="2">
    <location>
        <begin position="35"/>
        <end position="103"/>
    </location>
</feature>
<feature type="region of interest" description="Disordered" evidence="3">
    <location>
        <begin position="1"/>
        <end position="35"/>
    </location>
</feature>
<feature type="short sequence motif" description="9aaTAD" evidence="1">
    <location>
        <begin position="251"/>
        <end position="262"/>
    </location>
</feature>
<feature type="compositionally biased region" description="Polar residues" evidence="3">
    <location>
        <begin position="13"/>
        <end position="30"/>
    </location>
</feature>
<feature type="modified residue" description="Phosphoserine" evidence="7">
    <location>
        <position position="235"/>
    </location>
</feature>
<feature type="sequence conflict" description="In Ref. 3; BAD11369." evidence="8" ref="3">
    <original>S</original>
    <variation>G</variation>
    <location>
        <position position="218"/>
    </location>
</feature>
<sequence length="300" mass="33417">MYNMMETEIKSPIPQSNTGSVTGGKNNSANDQDRVKRPMNAFMVWSRGQRRKMAQENPKMHNSEISKRLGADWKLLTDAEKRPFIDEAKRLRAMHMKEHPDYKYRPRRKTKTLLKKDKYSLPGGLLAPGANAVNNAVSVGQRMDYTHMNGWTNSAYSLMQDQLAYPQHPSMNSPQIQQMHRYDMAGLQYPMMSTAQTYMNAASTYSSMSPAYTQQTSSAMGLGSMASVCKTEPSSPPPAITSHSQRACLGDLRDMISMYLPPGGDSADHSSLQTSRLHSVHPHYQSAGTGVNGTLPLTHI</sequence>
<reference evidence="8 10" key="1">
    <citation type="journal article" date="2004" name="Development">
        <title>Combinatorial Fgf and Bmp signalling patterns the gastrula ectoderm into prospective neural and epidermal domains.</title>
        <authorList>
            <person name="Kudoh T."/>
            <person name="Concha M.L."/>
            <person name="Houart C."/>
            <person name="Dawid I.B."/>
            <person name="Wilson S.W."/>
        </authorList>
    </citation>
    <scope>NUCLEOTIDE SEQUENCE [MRNA]</scope>
    <scope>DEVELOPMENTAL STAGE</scope>
</reference>
<reference evidence="8 12" key="2">
    <citation type="journal article" date="2006" name="Dev. Dyn.">
        <title>Comparative genomic and expression analysis of group B1 sox genes in zebrafish indicates their diversification during vertebrate evolution.</title>
        <authorList>
            <person name="Okuda Y."/>
            <person name="Yoda H."/>
            <person name="Uchikawa M."/>
            <person name="Furutani-Seiki M."/>
            <person name="Takeda H."/>
            <person name="Kondoh H."/>
            <person name="Kamachi Y."/>
        </authorList>
    </citation>
    <scope>NUCLEOTIDE SEQUENCE [MRNA]</scope>
    <scope>FUNCTION</scope>
    <scope>DEVELOPMENTAL STAGE</scope>
    <source>
        <tissue evidence="6">Embryo</tissue>
    </source>
</reference>
<reference evidence="11" key="3">
    <citation type="submission" date="2003-08" db="EMBL/GenBank/DDBJ databases">
        <title>Danio rerio Sox3 mRNA.</title>
        <authorList>
            <person name="Shimizu T."/>
            <person name="Hibi M."/>
        </authorList>
    </citation>
    <scope>NUCLEOTIDE SEQUENCE [MRNA]</scope>
</reference>
<reference key="4">
    <citation type="journal article" date="2013" name="Nature">
        <title>The zebrafish reference genome sequence and its relationship to the human genome.</title>
        <authorList>
            <person name="Howe K."/>
            <person name="Clark M.D."/>
            <person name="Torroja C.F."/>
            <person name="Torrance J."/>
            <person name="Berthelot C."/>
            <person name="Muffato M."/>
            <person name="Collins J.E."/>
            <person name="Humphray S."/>
            <person name="McLaren K."/>
            <person name="Matthews L."/>
            <person name="McLaren S."/>
            <person name="Sealy I."/>
            <person name="Caccamo M."/>
            <person name="Churcher C."/>
            <person name="Scott C."/>
            <person name="Barrett J.C."/>
            <person name="Koch R."/>
            <person name="Rauch G.J."/>
            <person name="White S."/>
            <person name="Chow W."/>
            <person name="Kilian B."/>
            <person name="Quintais L.T."/>
            <person name="Guerra-Assuncao J.A."/>
            <person name="Zhou Y."/>
            <person name="Gu Y."/>
            <person name="Yen J."/>
            <person name="Vogel J.H."/>
            <person name="Eyre T."/>
            <person name="Redmond S."/>
            <person name="Banerjee R."/>
            <person name="Chi J."/>
            <person name="Fu B."/>
            <person name="Langley E."/>
            <person name="Maguire S.F."/>
            <person name="Laird G.K."/>
            <person name="Lloyd D."/>
            <person name="Kenyon E."/>
            <person name="Donaldson S."/>
            <person name="Sehra H."/>
            <person name="Almeida-King J."/>
            <person name="Loveland J."/>
            <person name="Trevanion S."/>
            <person name="Jones M."/>
            <person name="Quail M."/>
            <person name="Willey D."/>
            <person name="Hunt A."/>
            <person name="Burton J."/>
            <person name="Sims S."/>
            <person name="McLay K."/>
            <person name="Plumb B."/>
            <person name="Davis J."/>
            <person name="Clee C."/>
            <person name="Oliver K."/>
            <person name="Clark R."/>
            <person name="Riddle C."/>
            <person name="Elliot D."/>
            <person name="Threadgold G."/>
            <person name="Harden G."/>
            <person name="Ware D."/>
            <person name="Begum S."/>
            <person name="Mortimore B."/>
            <person name="Kerry G."/>
            <person name="Heath P."/>
            <person name="Phillimore B."/>
            <person name="Tracey A."/>
            <person name="Corby N."/>
            <person name="Dunn M."/>
            <person name="Johnson C."/>
            <person name="Wood J."/>
            <person name="Clark S."/>
            <person name="Pelan S."/>
            <person name="Griffiths G."/>
            <person name="Smith M."/>
            <person name="Glithero R."/>
            <person name="Howden P."/>
            <person name="Barker N."/>
            <person name="Lloyd C."/>
            <person name="Stevens C."/>
            <person name="Harley J."/>
            <person name="Holt K."/>
            <person name="Panagiotidis G."/>
            <person name="Lovell J."/>
            <person name="Beasley H."/>
            <person name="Henderson C."/>
            <person name="Gordon D."/>
            <person name="Auger K."/>
            <person name="Wright D."/>
            <person name="Collins J."/>
            <person name="Raisen C."/>
            <person name="Dyer L."/>
            <person name="Leung K."/>
            <person name="Robertson L."/>
            <person name="Ambridge K."/>
            <person name="Leongamornlert D."/>
            <person name="McGuire S."/>
            <person name="Gilderthorp R."/>
            <person name="Griffiths C."/>
            <person name="Manthravadi D."/>
            <person name="Nichol S."/>
            <person name="Barker G."/>
            <person name="Whitehead S."/>
            <person name="Kay M."/>
            <person name="Brown J."/>
            <person name="Murnane C."/>
            <person name="Gray E."/>
            <person name="Humphries M."/>
            <person name="Sycamore N."/>
            <person name="Barker D."/>
            <person name="Saunders D."/>
            <person name="Wallis J."/>
            <person name="Babbage A."/>
            <person name="Hammond S."/>
            <person name="Mashreghi-Mohammadi M."/>
            <person name="Barr L."/>
            <person name="Martin S."/>
            <person name="Wray P."/>
            <person name="Ellington A."/>
            <person name="Matthews N."/>
            <person name="Ellwood M."/>
            <person name="Woodmansey R."/>
            <person name="Clark G."/>
            <person name="Cooper J."/>
            <person name="Tromans A."/>
            <person name="Grafham D."/>
            <person name="Skuce C."/>
            <person name="Pandian R."/>
            <person name="Andrews R."/>
            <person name="Harrison E."/>
            <person name="Kimberley A."/>
            <person name="Garnett J."/>
            <person name="Fosker N."/>
            <person name="Hall R."/>
            <person name="Garner P."/>
            <person name="Kelly D."/>
            <person name="Bird C."/>
            <person name="Palmer S."/>
            <person name="Gehring I."/>
            <person name="Berger A."/>
            <person name="Dooley C.M."/>
            <person name="Ersan-Urun Z."/>
            <person name="Eser C."/>
            <person name="Geiger H."/>
            <person name="Geisler M."/>
            <person name="Karotki L."/>
            <person name="Kirn A."/>
            <person name="Konantz J."/>
            <person name="Konantz M."/>
            <person name="Oberlander M."/>
            <person name="Rudolph-Geiger S."/>
            <person name="Teucke M."/>
            <person name="Lanz C."/>
            <person name="Raddatz G."/>
            <person name="Osoegawa K."/>
            <person name="Zhu B."/>
            <person name="Rapp A."/>
            <person name="Widaa S."/>
            <person name="Langford C."/>
            <person name="Yang F."/>
            <person name="Schuster S.C."/>
            <person name="Carter N.P."/>
            <person name="Harrow J."/>
            <person name="Ning Z."/>
            <person name="Herrero J."/>
            <person name="Searle S.M."/>
            <person name="Enright A."/>
            <person name="Geisler R."/>
            <person name="Plasterk R.H."/>
            <person name="Lee C."/>
            <person name="Westerfield M."/>
            <person name="de Jong P.J."/>
            <person name="Zon L.I."/>
            <person name="Postlethwait J.H."/>
            <person name="Nusslein-Volhard C."/>
            <person name="Hubbard T.J."/>
            <person name="Roest Crollius H."/>
            <person name="Rogers J."/>
            <person name="Stemple D.L."/>
        </authorList>
    </citation>
    <scope>NUCLEOTIDE SEQUENCE [LARGE SCALE GENOMIC DNA]</scope>
    <source>
        <strain>Tuebingen</strain>
    </source>
</reference>
<reference evidence="11" key="5">
    <citation type="submission" date="2005-04" db="EMBL/GenBank/DDBJ databases">
        <authorList>
            <consortium name="NIH - Zebrafish Gene Collection (ZGC) project"/>
        </authorList>
    </citation>
    <scope>NUCLEOTIDE SEQUENCE [LARGE SCALE MRNA]</scope>
    <source>
        <tissue evidence="9">Olfactory epithelium</tissue>
    </source>
</reference>
<reference key="6">
    <citation type="journal article" date="2004" name="Dev. Dyn.">
        <title>Fgf signaling induces posterior neuroectoderm independently of Bmp signaling inhibition.</title>
        <authorList>
            <person name="Rentzsch F."/>
            <person name="Bakkers J."/>
            <person name="Kramer C."/>
            <person name="Hammerschmidt M."/>
        </authorList>
    </citation>
    <scope>DEVELOPMENTAL STAGE</scope>
</reference>
<reference key="7">
    <citation type="journal article" date="2008" name="J. Proteome Res.">
        <title>Online automated in vivo zebrafish phosphoproteomics: from large-scale analysis down to a single embryo.</title>
        <authorList>
            <person name="Lemeer S."/>
            <person name="Pinkse M.W.H."/>
            <person name="Mohammed S."/>
            <person name="van Breukelen B."/>
            <person name="den Hertog J."/>
            <person name="Slijper M."/>
            <person name="Heck A.J.R."/>
        </authorList>
    </citation>
    <scope>PHOSPHORYLATION [LARGE SCALE ANALYSIS] AT SER-235</scope>
    <scope>IDENTIFICATION BY MASS SPECTROMETRY</scope>
    <source>
        <tissue>Embryo</tissue>
    </source>
</reference>
<gene>
    <name evidence="13" type="primary">sox3</name>
    <name type="ORF">zgc:110279</name>
</gene>
<dbReference type="EMBL" id="AY316135">
    <property type="protein sequence ID" value="AAP79985.1"/>
    <property type="molecule type" value="mRNA"/>
</dbReference>
<dbReference type="EMBL" id="AB242330">
    <property type="protein sequence ID" value="BAE48584.1"/>
    <property type="molecule type" value="mRNA"/>
</dbReference>
<dbReference type="EMBL" id="AB117960">
    <property type="protein sequence ID" value="BAD11369.2"/>
    <property type="molecule type" value="mRNA"/>
</dbReference>
<dbReference type="EMBL" id="BX088596">
    <property type="status" value="NOT_ANNOTATED_CDS"/>
    <property type="molecule type" value="Genomic_DNA"/>
</dbReference>
<dbReference type="EMBL" id="BC092845">
    <property type="protein sequence ID" value="AAH92845.1"/>
    <property type="molecule type" value="mRNA"/>
</dbReference>
<dbReference type="RefSeq" id="NP_001001811.2">
    <property type="nucleotide sequence ID" value="NM_001001811.2"/>
</dbReference>
<dbReference type="SMR" id="Q6EJB7"/>
<dbReference type="FunCoup" id="Q6EJB7">
    <property type="interactions" value="112"/>
</dbReference>
<dbReference type="STRING" id="7955.ENSDARP00000070099"/>
<dbReference type="iPTMnet" id="Q6EJB7"/>
<dbReference type="PaxDb" id="7955-ENSDARP00000070099"/>
<dbReference type="Ensembl" id="ENSDART00000075617">
    <property type="protein sequence ID" value="ENSDARP00000070099"/>
    <property type="gene ID" value="ENSDARG00000053569"/>
</dbReference>
<dbReference type="GeneID" id="30529"/>
<dbReference type="KEGG" id="dre:30529"/>
<dbReference type="AGR" id="ZFIN:ZDB-GENE-980526-333"/>
<dbReference type="CTD" id="6658"/>
<dbReference type="ZFIN" id="ZDB-GENE-980526-333">
    <property type="gene designation" value="sox3"/>
</dbReference>
<dbReference type="eggNOG" id="KOG0527">
    <property type="taxonomic scope" value="Eukaryota"/>
</dbReference>
<dbReference type="HOGENOM" id="CLU_021123_0_0_1"/>
<dbReference type="InParanoid" id="Q6EJB7"/>
<dbReference type="OMA" id="GWSNGAY"/>
<dbReference type="OrthoDB" id="6247875at2759"/>
<dbReference type="PhylomeDB" id="Q6EJB7"/>
<dbReference type="TreeFam" id="TF351735"/>
<dbReference type="Reactome" id="R-DRE-3769402">
    <property type="pathway name" value="Deactivation of the beta-catenin transactivating complex"/>
</dbReference>
<dbReference type="PRO" id="PR:Q6EJB7"/>
<dbReference type="Proteomes" id="UP000000437">
    <property type="component" value="Chromosome 14"/>
</dbReference>
<dbReference type="Bgee" id="ENSDARG00000053569">
    <property type="expression patterns" value="Expressed in midbrain and 77 other cell types or tissues"/>
</dbReference>
<dbReference type="ExpressionAtlas" id="Q6EJB7">
    <property type="expression patterns" value="baseline"/>
</dbReference>
<dbReference type="GO" id="GO:0005634">
    <property type="term" value="C:nucleus"/>
    <property type="evidence" value="ECO:0000318"/>
    <property type="project" value="GO_Central"/>
</dbReference>
<dbReference type="GO" id="GO:0001228">
    <property type="term" value="F:DNA-binding transcription activator activity, RNA polymerase II-specific"/>
    <property type="evidence" value="ECO:0000314"/>
    <property type="project" value="ZFIN"/>
</dbReference>
<dbReference type="GO" id="GO:0000978">
    <property type="term" value="F:RNA polymerase II cis-regulatory region sequence-specific DNA binding"/>
    <property type="evidence" value="ECO:0000318"/>
    <property type="project" value="GO_Central"/>
</dbReference>
<dbReference type="GO" id="GO:0007420">
    <property type="term" value="P:brain development"/>
    <property type="evidence" value="ECO:0000318"/>
    <property type="project" value="GO_Central"/>
</dbReference>
<dbReference type="GO" id="GO:0007417">
    <property type="term" value="P:central nervous system development"/>
    <property type="evidence" value="ECO:0000315"/>
    <property type="project" value="ZFIN"/>
</dbReference>
<dbReference type="GO" id="GO:0000122">
    <property type="term" value="P:negative regulation of transcription by RNA polymerase II"/>
    <property type="evidence" value="ECO:0000318"/>
    <property type="project" value="GO_Central"/>
</dbReference>
<dbReference type="GO" id="GO:0030182">
    <property type="term" value="P:neuron differentiation"/>
    <property type="evidence" value="ECO:0000315"/>
    <property type="project" value="ZFIN"/>
</dbReference>
<dbReference type="GO" id="GO:1905040">
    <property type="term" value="P:otic placode development"/>
    <property type="evidence" value="ECO:0000315"/>
    <property type="project" value="ZFIN"/>
</dbReference>
<dbReference type="GO" id="GO:0043049">
    <property type="term" value="P:otic placode formation"/>
    <property type="evidence" value="ECO:0000315"/>
    <property type="project" value="ZFIN"/>
</dbReference>
<dbReference type="GO" id="GO:0001541">
    <property type="term" value="P:ovarian follicle development"/>
    <property type="evidence" value="ECO:0000315"/>
    <property type="project" value="ZFIN"/>
</dbReference>
<dbReference type="GO" id="GO:0007422">
    <property type="term" value="P:peripheral nervous system development"/>
    <property type="evidence" value="ECO:0000315"/>
    <property type="project" value="ZFIN"/>
</dbReference>
<dbReference type="GO" id="GO:0045944">
    <property type="term" value="P:positive regulation of transcription by RNA polymerase II"/>
    <property type="evidence" value="ECO:0000318"/>
    <property type="project" value="GO_Central"/>
</dbReference>
<dbReference type="GO" id="GO:0006357">
    <property type="term" value="P:regulation of transcription by RNA polymerase II"/>
    <property type="evidence" value="ECO:0000314"/>
    <property type="project" value="ZFIN"/>
</dbReference>
<dbReference type="CDD" id="cd01388">
    <property type="entry name" value="HMG-box_SoxB"/>
    <property type="match status" value="1"/>
</dbReference>
<dbReference type="FunFam" id="1.10.30.10:FF:000002">
    <property type="entry name" value="transcription factor Sox-2"/>
    <property type="match status" value="1"/>
</dbReference>
<dbReference type="Gene3D" id="1.10.30.10">
    <property type="entry name" value="High mobility group box domain"/>
    <property type="match status" value="1"/>
</dbReference>
<dbReference type="InterPro" id="IPR009071">
    <property type="entry name" value="HMG_box_dom"/>
</dbReference>
<dbReference type="InterPro" id="IPR036910">
    <property type="entry name" value="HMG_box_dom_sf"/>
</dbReference>
<dbReference type="InterPro" id="IPR022097">
    <property type="entry name" value="SOX_fam"/>
</dbReference>
<dbReference type="InterPro" id="IPR050140">
    <property type="entry name" value="SRY-related_HMG-box_TF-like"/>
</dbReference>
<dbReference type="PANTHER" id="PTHR10270">
    <property type="entry name" value="SOX TRANSCRIPTION FACTOR"/>
    <property type="match status" value="1"/>
</dbReference>
<dbReference type="PANTHER" id="PTHR10270:SF111">
    <property type="entry name" value="TRANSCRIPTION FACTOR SOX-3"/>
    <property type="match status" value="1"/>
</dbReference>
<dbReference type="Pfam" id="PF00505">
    <property type="entry name" value="HMG_box"/>
    <property type="match status" value="1"/>
</dbReference>
<dbReference type="Pfam" id="PF12336">
    <property type="entry name" value="SOXp"/>
    <property type="match status" value="1"/>
</dbReference>
<dbReference type="SMART" id="SM00398">
    <property type="entry name" value="HMG"/>
    <property type="match status" value="1"/>
</dbReference>
<dbReference type="SUPFAM" id="SSF47095">
    <property type="entry name" value="HMG-box"/>
    <property type="match status" value="1"/>
</dbReference>
<dbReference type="PROSITE" id="PS50118">
    <property type="entry name" value="HMG_BOX_2"/>
    <property type="match status" value="1"/>
</dbReference>
<proteinExistence type="evidence at protein level"/>
<comment type="function">
    <text evidence="6">Transcriptional activator.</text>
</comment>
<comment type="subcellular location">
    <subcellularLocation>
        <location evidence="8">Nucleus</location>
    </subcellularLocation>
</comment>
<comment type="developmental stage">
    <text evidence="4 5 6">Expressed both maternally and zygotically. Maternal expression is weak and zygotic expression is strong by the 30% epiboly stage. At the gastrula stage, expressed in all prospective neural tissue with the exception of a band of cells in the prospective midbrain and hindbrain. At the tail bud to 3-somite stage, expressed in distinct regions of the future brain, the anterior margin of the neural plate and the primordia of the epibranchial placodes. At the 12-somite stage, broad expression in the central nervous system (CNS), with weakest expression at the forebrain-midbrain and midbrain-hindbrain boundaries and in the posterior CNS. At the 21- to 25-somite stage, broad expression in the CNS and the lens.</text>
</comment>
<comment type="domain">
    <text evidence="1">The 9aaTAD motif is a transactivation domain present in a large number of yeast and animal transcription factors.</text>
</comment>
<accession>Q6EJB7</accession>
<accession>Q762C1</accession>